<name>RBM34_MOUSE</name>
<protein>
    <recommendedName>
        <fullName>RNA-binding protein 34</fullName>
    </recommendedName>
    <alternativeName>
        <fullName>RNA-binding motif protein 34</fullName>
    </alternativeName>
</protein>
<accession>Q8C5L7</accession>
<accession>B2RUP0</accession>
<keyword id="KW-0007">Acetylation</keyword>
<keyword id="KW-1017">Isopeptide bond</keyword>
<keyword id="KW-0539">Nucleus</keyword>
<keyword id="KW-0597">Phosphoprotein</keyword>
<keyword id="KW-1185">Reference proteome</keyword>
<keyword id="KW-0677">Repeat</keyword>
<keyword id="KW-0694">RNA-binding</keyword>
<keyword id="KW-0832">Ubl conjugation</keyword>
<proteinExistence type="evidence at protein level"/>
<comment type="subcellular location">
    <subcellularLocation>
        <location evidence="1">Nucleus</location>
        <location evidence="1">Nucleolus</location>
    </subcellularLocation>
</comment>
<comment type="similarity">
    <text evidence="4">Belongs to the RRM RBM34 family.</text>
</comment>
<comment type="sequence caution" evidence="4">
    <conflict type="frameshift">
        <sequence resource="EMBL-CDS" id="BAC37124"/>
    </conflict>
</comment>
<gene>
    <name type="primary">Rbm34</name>
    <name type="synonym">D8Ertd233e</name>
</gene>
<evidence type="ECO:0000250" key="1">
    <source>
        <dbReference type="UniProtKB" id="P42696"/>
    </source>
</evidence>
<evidence type="ECO:0000255" key="2">
    <source>
        <dbReference type="PROSITE-ProRule" id="PRU00176"/>
    </source>
</evidence>
<evidence type="ECO:0000256" key="3">
    <source>
        <dbReference type="SAM" id="MobiDB-lite"/>
    </source>
</evidence>
<evidence type="ECO:0000305" key="4"/>
<evidence type="ECO:0000312" key="5">
    <source>
        <dbReference type="EMBL" id="AAI41279.1"/>
    </source>
</evidence>
<evidence type="ECO:0000312" key="6">
    <source>
        <dbReference type="EMBL" id="EDL11822.1"/>
    </source>
</evidence>
<evidence type="ECO:0000312" key="7">
    <source>
        <dbReference type="Proteomes" id="UP000000589"/>
    </source>
</evidence>
<evidence type="ECO:0007744" key="8">
    <source>
    </source>
</evidence>
<sequence>MALGGEERKRRKGSERRQSSGDGVSCAASDYLVGQVADSLRGGPRPPGGGTGRLAALFSTAEPSAPPVFVPVPQETSKKRKLDDDDDDEEESVSQTKKPVLQEPSRKVKVKKLSDADKRLANRESALASADLEEELHQDQGQGRRRRSQSRGKVADGEALDVALSLAKDGGQRTKIPVNPEEERLKNERTVFVGNLPVTCNKKKLKSFFKEYGQVESVRFRSVMPAEGTLTKKLAAIKRKFHPDQKSINAYVVFKDESAAAKALQRNGAQIAEGFRIRVDLASETASRDKRSVFVGNLPYKIEDSALEEHFLDCGSIVAVRIVRNPLTGVGRGFGYVLFENTDAVHLALKLNNSELMGRKLRVMRSVNKEKLKQQNSNPSLKKDVIKPKQRLNFTSKEGKFHSKEGKFHSKNAFIGEKAVLMKKKKKGQKKKVQMKKPRKQQ</sequence>
<dbReference type="EMBL" id="AC119874">
    <property type="status" value="NOT_ANNOTATED_CDS"/>
    <property type="molecule type" value="Genomic_DNA"/>
</dbReference>
<dbReference type="EMBL" id="AC115706">
    <property type="status" value="NOT_ANNOTATED_CDS"/>
    <property type="molecule type" value="Genomic_DNA"/>
</dbReference>
<dbReference type="EMBL" id="CH466525">
    <property type="protein sequence ID" value="EDL11822.1"/>
    <property type="molecule type" value="Genomic_DNA"/>
</dbReference>
<dbReference type="EMBL" id="AK078099">
    <property type="protein sequence ID" value="BAC37124.1"/>
    <property type="status" value="ALT_FRAME"/>
    <property type="molecule type" value="mRNA"/>
</dbReference>
<dbReference type="EMBL" id="BC141278">
    <property type="protein sequence ID" value="AAI41279.1"/>
    <property type="molecule type" value="mRNA"/>
</dbReference>
<dbReference type="CCDS" id="CCDS22787.1"/>
<dbReference type="RefSeq" id="NP_766350.2">
    <property type="nucleotide sequence ID" value="NM_172762.2"/>
</dbReference>
<dbReference type="SMR" id="Q8C5L7"/>
<dbReference type="BioGRID" id="206450">
    <property type="interactions" value="2"/>
</dbReference>
<dbReference type="FunCoup" id="Q8C5L7">
    <property type="interactions" value="2158"/>
</dbReference>
<dbReference type="STRING" id="10090.ENSMUSP00000048450"/>
<dbReference type="iPTMnet" id="Q8C5L7"/>
<dbReference type="PhosphoSitePlus" id="Q8C5L7"/>
<dbReference type="jPOST" id="Q8C5L7"/>
<dbReference type="PaxDb" id="10090-ENSMUSP00000048450"/>
<dbReference type="PeptideAtlas" id="Q8C5L7"/>
<dbReference type="ProteomicsDB" id="300266"/>
<dbReference type="ProteomicsDB" id="335327"/>
<dbReference type="Pumba" id="Q8C5L7"/>
<dbReference type="Antibodypedia" id="34694">
    <property type="antibodies" value="120 antibodies from 22 providers"/>
</dbReference>
<dbReference type="DNASU" id="52202"/>
<dbReference type="Ensembl" id="ENSMUST00000045994.8">
    <property type="protein sequence ID" value="ENSMUSP00000048450.7"/>
    <property type="gene ID" value="ENSMUSG00000033931.10"/>
</dbReference>
<dbReference type="GeneID" id="52202"/>
<dbReference type="KEGG" id="mmu:52202"/>
<dbReference type="UCSC" id="uc009nzb.1">
    <property type="organism name" value="mouse"/>
</dbReference>
<dbReference type="AGR" id="MGI:1098653"/>
<dbReference type="CTD" id="23029"/>
<dbReference type="MGI" id="MGI:1098653">
    <property type="gene designation" value="Rbm34"/>
</dbReference>
<dbReference type="VEuPathDB" id="HostDB:ENSMUSG00000033931"/>
<dbReference type="eggNOG" id="KOG0118">
    <property type="taxonomic scope" value="Eukaryota"/>
</dbReference>
<dbReference type="GeneTree" id="ENSGT00390000011249"/>
<dbReference type="HOGENOM" id="CLU_050628_0_0_1"/>
<dbReference type="InParanoid" id="Q8C5L7"/>
<dbReference type="OMA" id="CAVPKKG"/>
<dbReference type="OrthoDB" id="442677at2759"/>
<dbReference type="TreeFam" id="TF313083"/>
<dbReference type="BioGRID-ORCS" id="52202">
    <property type="hits" value="4 hits in 80 CRISPR screens"/>
</dbReference>
<dbReference type="PRO" id="PR:Q8C5L7"/>
<dbReference type="Proteomes" id="UP000000589">
    <property type="component" value="Chromosome 8"/>
</dbReference>
<dbReference type="RNAct" id="Q8C5L7">
    <property type="molecule type" value="protein"/>
</dbReference>
<dbReference type="Bgee" id="ENSMUSG00000033931">
    <property type="expression patterns" value="Expressed in ear vesicle and 229 other cell types or tissues"/>
</dbReference>
<dbReference type="ExpressionAtlas" id="Q8C5L7">
    <property type="expression patterns" value="baseline and differential"/>
</dbReference>
<dbReference type="GO" id="GO:0005694">
    <property type="term" value="C:chromosome"/>
    <property type="evidence" value="ECO:0007669"/>
    <property type="project" value="Ensembl"/>
</dbReference>
<dbReference type="GO" id="GO:0005730">
    <property type="term" value="C:nucleolus"/>
    <property type="evidence" value="ECO:0007669"/>
    <property type="project" value="UniProtKB-SubCell"/>
</dbReference>
<dbReference type="GO" id="GO:0005654">
    <property type="term" value="C:nucleoplasm"/>
    <property type="evidence" value="ECO:0007669"/>
    <property type="project" value="Ensembl"/>
</dbReference>
<dbReference type="GO" id="GO:0003723">
    <property type="term" value="F:RNA binding"/>
    <property type="evidence" value="ECO:0007669"/>
    <property type="project" value="UniProtKB-KW"/>
</dbReference>
<dbReference type="CDD" id="cd12394">
    <property type="entry name" value="RRM1_RBM34"/>
    <property type="match status" value="1"/>
</dbReference>
<dbReference type="CDD" id="cd12395">
    <property type="entry name" value="RRM2_RBM34"/>
    <property type="match status" value="1"/>
</dbReference>
<dbReference type="FunFam" id="3.30.70.330:FF:000511">
    <property type="entry name" value="RNA binding motif protein 34"/>
    <property type="match status" value="1"/>
</dbReference>
<dbReference type="FunFam" id="3.30.70.330:FF:000561">
    <property type="entry name" value="RNA-binding protein 34 isoform X2"/>
    <property type="match status" value="1"/>
</dbReference>
<dbReference type="Gene3D" id="3.30.70.330">
    <property type="match status" value="2"/>
</dbReference>
<dbReference type="InterPro" id="IPR012677">
    <property type="entry name" value="Nucleotide-bd_a/b_plait_sf"/>
</dbReference>
<dbReference type="InterPro" id="IPR035979">
    <property type="entry name" value="RBD_domain_sf"/>
</dbReference>
<dbReference type="InterPro" id="IPR034221">
    <property type="entry name" value="RBM34_RRM2"/>
</dbReference>
<dbReference type="InterPro" id="IPR000504">
    <property type="entry name" value="RRM_dom"/>
</dbReference>
<dbReference type="PANTHER" id="PTHR23236">
    <property type="entry name" value="EUKARYOTIC TRANSLATION INITIATION FACTOR 4B/4H"/>
    <property type="match status" value="1"/>
</dbReference>
<dbReference type="PANTHER" id="PTHR23236:SF25">
    <property type="entry name" value="RNA-BINDING PROTEIN 34"/>
    <property type="match status" value="1"/>
</dbReference>
<dbReference type="Pfam" id="PF00076">
    <property type="entry name" value="RRM_1"/>
    <property type="match status" value="2"/>
</dbReference>
<dbReference type="SMART" id="SM00360">
    <property type="entry name" value="RRM"/>
    <property type="match status" value="2"/>
</dbReference>
<dbReference type="SUPFAM" id="SSF54928">
    <property type="entry name" value="RNA-binding domain, RBD"/>
    <property type="match status" value="2"/>
</dbReference>
<dbReference type="PROSITE" id="PS50102">
    <property type="entry name" value="RRM"/>
    <property type="match status" value="2"/>
</dbReference>
<reference evidence="7" key="1">
    <citation type="journal article" date="2009" name="PLoS Biol.">
        <title>Lineage-specific biology revealed by a finished genome assembly of the mouse.</title>
        <authorList>
            <person name="Church D.M."/>
            <person name="Goodstadt L."/>
            <person name="Hillier L.W."/>
            <person name="Zody M.C."/>
            <person name="Goldstein S."/>
            <person name="She X."/>
            <person name="Bult C.J."/>
            <person name="Agarwala R."/>
            <person name="Cherry J.L."/>
            <person name="DiCuccio M."/>
            <person name="Hlavina W."/>
            <person name="Kapustin Y."/>
            <person name="Meric P."/>
            <person name="Maglott D."/>
            <person name="Birtle Z."/>
            <person name="Marques A.C."/>
            <person name="Graves T."/>
            <person name="Zhou S."/>
            <person name="Teague B."/>
            <person name="Potamousis K."/>
            <person name="Churas C."/>
            <person name="Place M."/>
            <person name="Herschleb J."/>
            <person name="Runnheim R."/>
            <person name="Forrest D."/>
            <person name="Amos-Landgraf J."/>
            <person name="Schwartz D.C."/>
            <person name="Cheng Z."/>
            <person name="Lindblad-Toh K."/>
            <person name="Eichler E.E."/>
            <person name="Ponting C.P."/>
        </authorList>
    </citation>
    <scope>NUCLEOTIDE SEQUENCE [LARGE SCALE GENOMIC DNA]</scope>
    <source>
        <strain evidence="7">C57BL/6J</strain>
    </source>
</reference>
<reference evidence="6" key="2">
    <citation type="submission" date="2005-07" db="EMBL/GenBank/DDBJ databases">
        <authorList>
            <person name="Mural R.J."/>
            <person name="Adams M.D."/>
            <person name="Myers E.W."/>
            <person name="Smith H.O."/>
            <person name="Venter J.C."/>
        </authorList>
    </citation>
    <scope>NUCLEOTIDE SEQUENCE [LARGE SCALE GENOMIC DNA]</scope>
</reference>
<reference evidence="5" key="3">
    <citation type="journal article" date="2005" name="Science">
        <title>The transcriptional landscape of the mammalian genome.</title>
        <authorList>
            <person name="Carninci P."/>
            <person name="Kasukawa T."/>
            <person name="Katayama S."/>
            <person name="Gough J."/>
            <person name="Frith M.C."/>
            <person name="Maeda N."/>
            <person name="Oyama R."/>
            <person name="Ravasi T."/>
            <person name="Lenhard B."/>
            <person name="Wells C."/>
            <person name="Kodzius R."/>
            <person name="Shimokawa K."/>
            <person name="Bajic V.B."/>
            <person name="Brenner S.E."/>
            <person name="Batalov S."/>
            <person name="Forrest A.R."/>
            <person name="Zavolan M."/>
            <person name="Davis M.J."/>
            <person name="Wilming L.G."/>
            <person name="Aidinis V."/>
            <person name="Allen J.E."/>
            <person name="Ambesi-Impiombato A."/>
            <person name="Apweiler R."/>
            <person name="Aturaliya R.N."/>
            <person name="Bailey T.L."/>
            <person name="Bansal M."/>
            <person name="Baxter L."/>
            <person name="Beisel K.W."/>
            <person name="Bersano T."/>
            <person name="Bono H."/>
            <person name="Chalk A.M."/>
            <person name="Chiu K.P."/>
            <person name="Choudhary V."/>
            <person name="Christoffels A."/>
            <person name="Clutterbuck D.R."/>
            <person name="Crowe M.L."/>
            <person name="Dalla E."/>
            <person name="Dalrymple B.P."/>
            <person name="de Bono B."/>
            <person name="Della Gatta G."/>
            <person name="di Bernardo D."/>
            <person name="Down T."/>
            <person name="Engstrom P."/>
            <person name="Fagiolini M."/>
            <person name="Faulkner G."/>
            <person name="Fletcher C.F."/>
            <person name="Fukushima T."/>
            <person name="Furuno M."/>
            <person name="Futaki S."/>
            <person name="Gariboldi M."/>
            <person name="Georgii-Hemming P."/>
            <person name="Gingeras T.R."/>
            <person name="Gojobori T."/>
            <person name="Green R.E."/>
            <person name="Gustincich S."/>
            <person name="Harbers M."/>
            <person name="Hayashi Y."/>
            <person name="Hensch T.K."/>
            <person name="Hirokawa N."/>
            <person name="Hill D."/>
            <person name="Huminiecki L."/>
            <person name="Iacono M."/>
            <person name="Ikeo K."/>
            <person name="Iwama A."/>
            <person name="Ishikawa T."/>
            <person name="Jakt M."/>
            <person name="Kanapin A."/>
            <person name="Katoh M."/>
            <person name="Kawasawa Y."/>
            <person name="Kelso J."/>
            <person name="Kitamura H."/>
            <person name="Kitano H."/>
            <person name="Kollias G."/>
            <person name="Krishnan S.P."/>
            <person name="Kruger A."/>
            <person name="Kummerfeld S.K."/>
            <person name="Kurochkin I.V."/>
            <person name="Lareau L.F."/>
            <person name="Lazarevic D."/>
            <person name="Lipovich L."/>
            <person name="Liu J."/>
            <person name="Liuni S."/>
            <person name="McWilliam S."/>
            <person name="Madan Babu M."/>
            <person name="Madera M."/>
            <person name="Marchionni L."/>
            <person name="Matsuda H."/>
            <person name="Matsuzawa S."/>
            <person name="Miki H."/>
            <person name="Mignone F."/>
            <person name="Miyake S."/>
            <person name="Morris K."/>
            <person name="Mottagui-Tabar S."/>
            <person name="Mulder N."/>
            <person name="Nakano N."/>
            <person name="Nakauchi H."/>
            <person name="Ng P."/>
            <person name="Nilsson R."/>
            <person name="Nishiguchi S."/>
            <person name="Nishikawa S."/>
            <person name="Nori F."/>
            <person name="Ohara O."/>
            <person name="Okazaki Y."/>
            <person name="Orlando V."/>
            <person name="Pang K.C."/>
            <person name="Pavan W.J."/>
            <person name="Pavesi G."/>
            <person name="Pesole G."/>
            <person name="Petrovsky N."/>
            <person name="Piazza S."/>
            <person name="Reed J."/>
            <person name="Reid J.F."/>
            <person name="Ring B.Z."/>
            <person name="Ringwald M."/>
            <person name="Rost B."/>
            <person name="Ruan Y."/>
            <person name="Salzberg S.L."/>
            <person name="Sandelin A."/>
            <person name="Schneider C."/>
            <person name="Schoenbach C."/>
            <person name="Sekiguchi K."/>
            <person name="Semple C.A."/>
            <person name="Seno S."/>
            <person name="Sessa L."/>
            <person name="Sheng Y."/>
            <person name="Shibata Y."/>
            <person name="Shimada H."/>
            <person name="Shimada K."/>
            <person name="Silva D."/>
            <person name="Sinclair B."/>
            <person name="Sperling S."/>
            <person name="Stupka E."/>
            <person name="Sugiura K."/>
            <person name="Sultana R."/>
            <person name="Takenaka Y."/>
            <person name="Taki K."/>
            <person name="Tammoja K."/>
            <person name="Tan S.L."/>
            <person name="Tang S."/>
            <person name="Taylor M.S."/>
            <person name="Tegner J."/>
            <person name="Teichmann S.A."/>
            <person name="Ueda H.R."/>
            <person name="van Nimwegen E."/>
            <person name="Verardo R."/>
            <person name="Wei C.L."/>
            <person name="Yagi K."/>
            <person name="Yamanishi H."/>
            <person name="Zabarovsky E."/>
            <person name="Zhu S."/>
            <person name="Zimmer A."/>
            <person name="Hide W."/>
            <person name="Bult C."/>
            <person name="Grimmond S.M."/>
            <person name="Teasdale R.D."/>
            <person name="Liu E.T."/>
            <person name="Brusic V."/>
            <person name="Quackenbush J."/>
            <person name="Wahlestedt C."/>
            <person name="Mattick J.S."/>
            <person name="Hume D.A."/>
            <person name="Kai C."/>
            <person name="Sasaki D."/>
            <person name="Tomaru Y."/>
            <person name="Fukuda S."/>
            <person name="Kanamori-Katayama M."/>
            <person name="Suzuki M."/>
            <person name="Aoki J."/>
            <person name="Arakawa T."/>
            <person name="Iida J."/>
            <person name="Imamura K."/>
            <person name="Itoh M."/>
            <person name="Kato T."/>
            <person name="Kawaji H."/>
            <person name="Kawagashira N."/>
            <person name="Kawashima T."/>
            <person name="Kojima M."/>
            <person name="Kondo S."/>
            <person name="Konno H."/>
            <person name="Nakano K."/>
            <person name="Ninomiya N."/>
            <person name="Nishio T."/>
            <person name="Okada M."/>
            <person name="Plessy C."/>
            <person name="Shibata K."/>
            <person name="Shiraki T."/>
            <person name="Suzuki S."/>
            <person name="Tagami M."/>
            <person name="Waki K."/>
            <person name="Watahiki A."/>
            <person name="Okamura-Oho Y."/>
            <person name="Suzuki H."/>
            <person name="Kawai J."/>
            <person name="Hayashizaki Y."/>
        </authorList>
    </citation>
    <scope>NUCLEOTIDE SEQUENCE [LARGE SCALE MRNA]</scope>
    <source>
        <strain>C57BL/6J</strain>
        <tissue>Medulla oblongata</tissue>
    </source>
</reference>
<reference evidence="5" key="4">
    <citation type="journal article" date="2004" name="Genome Res.">
        <title>The status, quality, and expansion of the NIH full-length cDNA project: the Mammalian Gene Collection (MGC).</title>
        <authorList>
            <consortium name="The MGC Project Team"/>
        </authorList>
    </citation>
    <scope>NUCLEOTIDE SEQUENCE [LARGE SCALE MRNA]</scope>
    <source>
        <tissue evidence="5">Brain</tissue>
    </source>
</reference>
<reference key="5">
    <citation type="journal article" date="2010" name="Cell">
        <title>A tissue-specific atlas of mouse protein phosphorylation and expression.</title>
        <authorList>
            <person name="Huttlin E.L."/>
            <person name="Jedrychowski M.P."/>
            <person name="Elias J.E."/>
            <person name="Goswami T."/>
            <person name="Rad R."/>
            <person name="Beausoleil S.A."/>
            <person name="Villen J."/>
            <person name="Haas W."/>
            <person name="Sowa M.E."/>
            <person name="Gygi S.P."/>
        </authorList>
    </citation>
    <scope>IDENTIFICATION BY MASS SPECTROMETRY [LARGE SCALE ANALYSIS]</scope>
    <source>
        <tissue>Kidney</tissue>
        <tissue>Lung</tissue>
        <tissue>Pancreas</tissue>
        <tissue>Spleen</tissue>
    </source>
</reference>
<reference key="6">
    <citation type="journal article" date="2013" name="Mol. Cell">
        <title>SIRT5-mediated lysine desuccinylation impacts diverse metabolic pathways.</title>
        <authorList>
            <person name="Park J."/>
            <person name="Chen Y."/>
            <person name="Tishkoff D.X."/>
            <person name="Peng C."/>
            <person name="Tan M."/>
            <person name="Dai L."/>
            <person name="Xie Z."/>
            <person name="Zhang Y."/>
            <person name="Zwaans B.M."/>
            <person name="Skinner M.E."/>
            <person name="Lombard D.B."/>
            <person name="Zhao Y."/>
        </authorList>
    </citation>
    <scope>ACETYLATION [LARGE SCALE ANALYSIS] AT LYS-153</scope>
    <scope>IDENTIFICATION BY MASS SPECTROMETRY [LARGE SCALE ANALYSIS]</scope>
    <source>
        <tissue>Embryonic fibroblast</tissue>
    </source>
</reference>
<organism>
    <name type="scientific">Mus musculus</name>
    <name type="common">Mouse</name>
    <dbReference type="NCBI Taxonomy" id="10090"/>
    <lineage>
        <taxon>Eukaryota</taxon>
        <taxon>Metazoa</taxon>
        <taxon>Chordata</taxon>
        <taxon>Craniata</taxon>
        <taxon>Vertebrata</taxon>
        <taxon>Euteleostomi</taxon>
        <taxon>Mammalia</taxon>
        <taxon>Eutheria</taxon>
        <taxon>Euarchontoglires</taxon>
        <taxon>Glires</taxon>
        <taxon>Rodentia</taxon>
        <taxon>Myomorpha</taxon>
        <taxon>Muroidea</taxon>
        <taxon>Muridae</taxon>
        <taxon>Murinae</taxon>
        <taxon>Mus</taxon>
        <taxon>Mus</taxon>
    </lineage>
</organism>
<feature type="chain" id="PRO_0000081791" description="RNA-binding protein 34">
    <location>
        <begin position="1"/>
        <end position="442"/>
    </location>
</feature>
<feature type="domain" description="RRM 1" evidence="2">
    <location>
        <begin position="189"/>
        <end position="284"/>
    </location>
</feature>
<feature type="domain" description="RRM 2" evidence="2">
    <location>
        <begin position="291"/>
        <end position="368"/>
    </location>
</feature>
<feature type="region of interest" description="Disordered" evidence="3">
    <location>
        <begin position="1"/>
        <end position="26"/>
    </location>
</feature>
<feature type="region of interest" description="Disordered" evidence="3">
    <location>
        <begin position="60"/>
        <end position="157"/>
    </location>
</feature>
<feature type="region of interest" description="Disordered" evidence="3">
    <location>
        <begin position="418"/>
        <end position="442"/>
    </location>
</feature>
<feature type="compositionally biased region" description="Basic and acidic residues" evidence="3">
    <location>
        <begin position="112"/>
        <end position="122"/>
    </location>
</feature>
<feature type="compositionally biased region" description="Basic residues" evidence="3">
    <location>
        <begin position="421"/>
        <end position="442"/>
    </location>
</feature>
<feature type="modified residue" description="N6-acetyllysine" evidence="8">
    <location>
        <position position="153"/>
    </location>
</feature>
<feature type="modified residue" description="Phosphoserine" evidence="1">
    <location>
        <position position="292"/>
    </location>
</feature>
<feature type="cross-link" description="Glycyl lysine isopeptide (Lys-Gly) (interchain with G-Cter in SUMO2)" evidence="1">
    <location>
        <position position="246"/>
    </location>
</feature>